<accession>A7MZ47</accession>
<feature type="chain" id="PRO_1000010897" description="Elongation factor P">
    <location>
        <begin position="1"/>
        <end position="188"/>
    </location>
</feature>
<feature type="modified residue" description="N6-(3,6-diaminohexanoyl)-5-hydroxylysine" evidence="1">
    <location>
        <position position="34"/>
    </location>
</feature>
<proteinExistence type="inferred from homology"/>
<comment type="function">
    <text evidence="1">Involved in peptide bond synthesis. Alleviates ribosome stalling that occurs when 3 or more consecutive Pro residues or the sequence PPG is present in a protein, possibly by augmenting the peptidyl transferase activity of the ribosome. Modification of Lys-34 is required for alleviation.</text>
</comment>
<comment type="pathway">
    <text evidence="1">Protein biosynthesis; polypeptide chain elongation.</text>
</comment>
<comment type="subcellular location">
    <subcellularLocation>
        <location evidence="1">Cytoplasm</location>
    </subcellularLocation>
</comment>
<comment type="PTM">
    <text evidence="1">May be beta-lysylated on the epsilon-amino group of Lys-34 by the combined action of EpmA and EpmB, and then hydroxylated on the C5 position of the same residue by EpmC (if this protein is present). Lysylation is critical for the stimulatory effect of EF-P on peptide-bond formation. The lysylation moiety may extend toward the peptidyltransferase center and stabilize the terminal 3-CCA end of the tRNA. Hydroxylation of the C5 position on Lys-34 may allow additional potential stabilizing hydrogen-bond interactions with the P-tRNA.</text>
</comment>
<comment type="similarity">
    <text evidence="1">Belongs to the elongation factor P family.</text>
</comment>
<evidence type="ECO:0000255" key="1">
    <source>
        <dbReference type="HAMAP-Rule" id="MF_00141"/>
    </source>
</evidence>
<protein>
    <recommendedName>
        <fullName evidence="1">Elongation factor P</fullName>
        <shortName evidence="1">EF-P</shortName>
    </recommendedName>
</protein>
<sequence length="188" mass="20600">MATVSTNEFKGGLKLMLDNEPCVILENEYVKPGKGQAFNRVKIRKLLSGKVLEKTFKSGDTCEVADVMDIDLDYLYSDGEFYHFMNNETFEQIAADAKAVGDNAKWLVENNTCMITLWNGNPITVTPPNFVELEVTDTDPGLKGDTQGTGGKPATLSTGAVVRVPLFIAIGEVIKVDTRTAEYVGRVK</sequence>
<dbReference type="EMBL" id="CP000789">
    <property type="protein sequence ID" value="ABU69185.1"/>
    <property type="molecule type" value="Genomic_DNA"/>
</dbReference>
<dbReference type="RefSeq" id="WP_005425036.1">
    <property type="nucleotide sequence ID" value="NC_022269.1"/>
</dbReference>
<dbReference type="SMR" id="A7MZ47"/>
<dbReference type="GeneID" id="83583601"/>
<dbReference type="KEGG" id="vha:VIBHAR_00137"/>
<dbReference type="PATRIC" id="fig|338187.25.peg.2396"/>
<dbReference type="UniPathway" id="UPA00345"/>
<dbReference type="Proteomes" id="UP000008152">
    <property type="component" value="Chromosome I"/>
</dbReference>
<dbReference type="GO" id="GO:0005737">
    <property type="term" value="C:cytoplasm"/>
    <property type="evidence" value="ECO:0007669"/>
    <property type="project" value="UniProtKB-SubCell"/>
</dbReference>
<dbReference type="GO" id="GO:0003746">
    <property type="term" value="F:translation elongation factor activity"/>
    <property type="evidence" value="ECO:0007669"/>
    <property type="project" value="UniProtKB-UniRule"/>
</dbReference>
<dbReference type="GO" id="GO:0043043">
    <property type="term" value="P:peptide biosynthetic process"/>
    <property type="evidence" value="ECO:0007669"/>
    <property type="project" value="InterPro"/>
</dbReference>
<dbReference type="CDD" id="cd04470">
    <property type="entry name" value="S1_EF-P_repeat_1"/>
    <property type="match status" value="1"/>
</dbReference>
<dbReference type="CDD" id="cd05794">
    <property type="entry name" value="S1_EF-P_repeat_2"/>
    <property type="match status" value="1"/>
</dbReference>
<dbReference type="FunFam" id="2.30.30.30:FF:000003">
    <property type="entry name" value="Elongation factor P"/>
    <property type="match status" value="1"/>
</dbReference>
<dbReference type="FunFam" id="2.40.50.140:FF:000004">
    <property type="entry name" value="Elongation factor P"/>
    <property type="match status" value="1"/>
</dbReference>
<dbReference type="FunFam" id="2.40.50.140:FF:000009">
    <property type="entry name" value="Elongation factor P"/>
    <property type="match status" value="1"/>
</dbReference>
<dbReference type="Gene3D" id="2.30.30.30">
    <property type="match status" value="1"/>
</dbReference>
<dbReference type="Gene3D" id="2.40.50.140">
    <property type="entry name" value="Nucleic acid-binding proteins"/>
    <property type="match status" value="2"/>
</dbReference>
<dbReference type="HAMAP" id="MF_00141">
    <property type="entry name" value="EF_P"/>
    <property type="match status" value="1"/>
</dbReference>
<dbReference type="InterPro" id="IPR015365">
    <property type="entry name" value="Elong-fact-P_C"/>
</dbReference>
<dbReference type="InterPro" id="IPR012340">
    <property type="entry name" value="NA-bd_OB-fold"/>
</dbReference>
<dbReference type="InterPro" id="IPR014722">
    <property type="entry name" value="Rib_uL2_dom2"/>
</dbReference>
<dbReference type="InterPro" id="IPR020599">
    <property type="entry name" value="Transl_elong_fac_P/YeiP"/>
</dbReference>
<dbReference type="InterPro" id="IPR013185">
    <property type="entry name" value="Transl_elong_KOW-like"/>
</dbReference>
<dbReference type="InterPro" id="IPR001059">
    <property type="entry name" value="Transl_elong_P/YeiP_cen"/>
</dbReference>
<dbReference type="InterPro" id="IPR013852">
    <property type="entry name" value="Transl_elong_P/YeiP_CS"/>
</dbReference>
<dbReference type="InterPro" id="IPR011768">
    <property type="entry name" value="Transl_elongation_fac_P"/>
</dbReference>
<dbReference type="InterPro" id="IPR008991">
    <property type="entry name" value="Translation_prot_SH3-like_sf"/>
</dbReference>
<dbReference type="NCBIfam" id="TIGR00038">
    <property type="entry name" value="efp"/>
    <property type="match status" value="1"/>
</dbReference>
<dbReference type="NCBIfam" id="NF001810">
    <property type="entry name" value="PRK00529.1"/>
    <property type="match status" value="1"/>
</dbReference>
<dbReference type="PANTHER" id="PTHR30053">
    <property type="entry name" value="ELONGATION FACTOR P"/>
    <property type="match status" value="1"/>
</dbReference>
<dbReference type="PANTHER" id="PTHR30053:SF12">
    <property type="entry name" value="ELONGATION FACTOR P (EF-P) FAMILY PROTEIN"/>
    <property type="match status" value="1"/>
</dbReference>
<dbReference type="Pfam" id="PF01132">
    <property type="entry name" value="EFP"/>
    <property type="match status" value="1"/>
</dbReference>
<dbReference type="Pfam" id="PF08207">
    <property type="entry name" value="EFP_N"/>
    <property type="match status" value="1"/>
</dbReference>
<dbReference type="Pfam" id="PF09285">
    <property type="entry name" value="Elong-fact-P_C"/>
    <property type="match status" value="1"/>
</dbReference>
<dbReference type="PIRSF" id="PIRSF005901">
    <property type="entry name" value="EF-P"/>
    <property type="match status" value="1"/>
</dbReference>
<dbReference type="SMART" id="SM01185">
    <property type="entry name" value="EFP"/>
    <property type="match status" value="1"/>
</dbReference>
<dbReference type="SMART" id="SM00841">
    <property type="entry name" value="Elong-fact-P_C"/>
    <property type="match status" value="1"/>
</dbReference>
<dbReference type="SUPFAM" id="SSF50249">
    <property type="entry name" value="Nucleic acid-binding proteins"/>
    <property type="match status" value="2"/>
</dbReference>
<dbReference type="SUPFAM" id="SSF50104">
    <property type="entry name" value="Translation proteins SH3-like domain"/>
    <property type="match status" value="1"/>
</dbReference>
<dbReference type="PROSITE" id="PS01275">
    <property type="entry name" value="EFP"/>
    <property type="match status" value="1"/>
</dbReference>
<keyword id="KW-0963">Cytoplasm</keyword>
<keyword id="KW-0251">Elongation factor</keyword>
<keyword id="KW-0379">Hydroxylation</keyword>
<keyword id="KW-0648">Protein biosynthesis</keyword>
<reference key="1">
    <citation type="submission" date="2007-08" db="EMBL/GenBank/DDBJ databases">
        <authorList>
            <consortium name="The Vibrio harveyi Genome Sequencing Project"/>
            <person name="Bassler B."/>
            <person name="Clifton S.W."/>
            <person name="Fulton L."/>
            <person name="Delehaunty K."/>
            <person name="Fronick C."/>
            <person name="Harrison M."/>
            <person name="Markivic C."/>
            <person name="Fulton R."/>
            <person name="Tin-Wollam A.-M."/>
            <person name="Shah N."/>
            <person name="Pepin K."/>
            <person name="Nash W."/>
            <person name="Thiruvilangam P."/>
            <person name="Bhonagiri V."/>
            <person name="Waters C."/>
            <person name="Tu K.C."/>
            <person name="Irgon J."/>
            <person name="Wilson R.K."/>
        </authorList>
    </citation>
    <scope>NUCLEOTIDE SEQUENCE [LARGE SCALE GENOMIC DNA]</scope>
    <source>
        <strain>ATCC BAA-1116 / BB120</strain>
    </source>
</reference>
<name>EFP_VIBC1</name>
<gene>
    <name evidence="1" type="primary">efp</name>
    <name type="ordered locus">VIBHAR_00137</name>
</gene>
<organism>
    <name type="scientific">Vibrio campbellii (strain ATCC BAA-1116)</name>
    <dbReference type="NCBI Taxonomy" id="2902295"/>
    <lineage>
        <taxon>Bacteria</taxon>
        <taxon>Pseudomonadati</taxon>
        <taxon>Pseudomonadota</taxon>
        <taxon>Gammaproteobacteria</taxon>
        <taxon>Vibrionales</taxon>
        <taxon>Vibrionaceae</taxon>
        <taxon>Vibrio</taxon>
    </lineage>
</organism>